<dbReference type="EMBL" id="CP001176">
    <property type="protein sequence ID" value="ACK63409.1"/>
    <property type="molecule type" value="Genomic_DNA"/>
</dbReference>
<dbReference type="RefSeq" id="WP_000111485.1">
    <property type="nucleotide sequence ID" value="NZ_VEHB01000002.1"/>
</dbReference>
<dbReference type="SMR" id="B7HDV0"/>
<dbReference type="GeneID" id="93007285"/>
<dbReference type="KEGG" id="bcb:BCB4264_A3925"/>
<dbReference type="HOGENOM" id="CLU_040318_1_2_9"/>
<dbReference type="Proteomes" id="UP000007096">
    <property type="component" value="Chromosome"/>
</dbReference>
<dbReference type="GO" id="GO:0022627">
    <property type="term" value="C:cytosolic small ribosomal subunit"/>
    <property type="evidence" value="ECO:0007669"/>
    <property type="project" value="TreeGrafter"/>
</dbReference>
<dbReference type="GO" id="GO:0003735">
    <property type="term" value="F:structural constituent of ribosome"/>
    <property type="evidence" value="ECO:0007669"/>
    <property type="project" value="InterPro"/>
</dbReference>
<dbReference type="GO" id="GO:0006412">
    <property type="term" value="P:translation"/>
    <property type="evidence" value="ECO:0007669"/>
    <property type="project" value="UniProtKB-UniRule"/>
</dbReference>
<dbReference type="CDD" id="cd01425">
    <property type="entry name" value="RPS2"/>
    <property type="match status" value="1"/>
</dbReference>
<dbReference type="FunFam" id="1.10.287.610:FF:000001">
    <property type="entry name" value="30S ribosomal protein S2"/>
    <property type="match status" value="1"/>
</dbReference>
<dbReference type="Gene3D" id="3.40.50.10490">
    <property type="entry name" value="Glucose-6-phosphate isomerase like protein, domain 1"/>
    <property type="match status" value="1"/>
</dbReference>
<dbReference type="Gene3D" id="1.10.287.610">
    <property type="entry name" value="Helix hairpin bin"/>
    <property type="match status" value="1"/>
</dbReference>
<dbReference type="HAMAP" id="MF_00291_B">
    <property type="entry name" value="Ribosomal_uS2_B"/>
    <property type="match status" value="1"/>
</dbReference>
<dbReference type="InterPro" id="IPR001865">
    <property type="entry name" value="Ribosomal_uS2"/>
</dbReference>
<dbReference type="InterPro" id="IPR005706">
    <property type="entry name" value="Ribosomal_uS2_bac/mit/plastid"/>
</dbReference>
<dbReference type="InterPro" id="IPR018130">
    <property type="entry name" value="Ribosomal_uS2_CS"/>
</dbReference>
<dbReference type="InterPro" id="IPR023591">
    <property type="entry name" value="Ribosomal_uS2_flav_dom_sf"/>
</dbReference>
<dbReference type="NCBIfam" id="TIGR01011">
    <property type="entry name" value="rpsB_bact"/>
    <property type="match status" value="1"/>
</dbReference>
<dbReference type="PANTHER" id="PTHR12534">
    <property type="entry name" value="30S RIBOSOMAL PROTEIN S2 PROKARYOTIC AND ORGANELLAR"/>
    <property type="match status" value="1"/>
</dbReference>
<dbReference type="PANTHER" id="PTHR12534:SF0">
    <property type="entry name" value="SMALL RIBOSOMAL SUBUNIT PROTEIN US2M"/>
    <property type="match status" value="1"/>
</dbReference>
<dbReference type="Pfam" id="PF00318">
    <property type="entry name" value="Ribosomal_S2"/>
    <property type="match status" value="1"/>
</dbReference>
<dbReference type="PRINTS" id="PR00395">
    <property type="entry name" value="RIBOSOMALS2"/>
</dbReference>
<dbReference type="SUPFAM" id="SSF52313">
    <property type="entry name" value="Ribosomal protein S2"/>
    <property type="match status" value="1"/>
</dbReference>
<dbReference type="PROSITE" id="PS00962">
    <property type="entry name" value="RIBOSOMAL_S2_1"/>
    <property type="match status" value="1"/>
</dbReference>
<dbReference type="PROSITE" id="PS00963">
    <property type="entry name" value="RIBOSOMAL_S2_2"/>
    <property type="match status" value="1"/>
</dbReference>
<protein>
    <recommendedName>
        <fullName evidence="1">Small ribosomal subunit protein uS2</fullName>
    </recommendedName>
    <alternativeName>
        <fullName evidence="2">30S ribosomal protein S2</fullName>
    </alternativeName>
</protein>
<organism>
    <name type="scientific">Bacillus cereus (strain B4264)</name>
    <dbReference type="NCBI Taxonomy" id="405532"/>
    <lineage>
        <taxon>Bacteria</taxon>
        <taxon>Bacillati</taxon>
        <taxon>Bacillota</taxon>
        <taxon>Bacilli</taxon>
        <taxon>Bacillales</taxon>
        <taxon>Bacillaceae</taxon>
        <taxon>Bacillus</taxon>
        <taxon>Bacillus cereus group</taxon>
    </lineage>
</organism>
<evidence type="ECO:0000255" key="1">
    <source>
        <dbReference type="HAMAP-Rule" id="MF_00291"/>
    </source>
</evidence>
<evidence type="ECO:0000305" key="2"/>
<reference key="1">
    <citation type="submission" date="2008-10" db="EMBL/GenBank/DDBJ databases">
        <title>Genome sequence of Bacillus cereus B4264.</title>
        <authorList>
            <person name="Dodson R.J."/>
            <person name="Durkin A.S."/>
            <person name="Rosovitz M.J."/>
            <person name="Rasko D.A."/>
            <person name="Hoffmaster A."/>
            <person name="Ravel J."/>
            <person name="Sutton G."/>
        </authorList>
    </citation>
    <scope>NUCLEOTIDE SEQUENCE [LARGE SCALE GENOMIC DNA]</scope>
    <source>
        <strain>B4264</strain>
    </source>
</reference>
<name>RS2_BACC4</name>
<keyword id="KW-0687">Ribonucleoprotein</keyword>
<keyword id="KW-0689">Ribosomal protein</keyword>
<sequence length="233" mass="26563">MSVISMKQLLEAGVHFGHQTRRWNPKMKRYIFTERNGIYIIDLQKTVKKVEEAYRTMRDIAAEGGDILFVGTKKQAQEAIKEEATRAGMYFVNQRWLGGTLTNFQTIQKRIKRLKDIERMQEDGTFEVLPKKEVVQLKKELERLEKFLGGIKDMKGLPSALFVVDPRKERIAVAEARKLHIPIIGIVDTNCDPDEIDHVIPANDDAIRAVKLLTSKMADAILEAKQGEETVTA</sequence>
<feature type="chain" id="PRO_1000119417" description="Small ribosomal subunit protein uS2">
    <location>
        <begin position="1"/>
        <end position="233"/>
    </location>
</feature>
<comment type="similarity">
    <text evidence="1">Belongs to the universal ribosomal protein uS2 family.</text>
</comment>
<gene>
    <name evidence="1" type="primary">rpsB</name>
    <name type="ordered locus">BCB4264_A3925</name>
</gene>
<accession>B7HDV0</accession>
<proteinExistence type="inferred from homology"/>